<dbReference type="EC" id="3.6.1.31" evidence="1"/>
<dbReference type="EMBL" id="BX248357">
    <property type="protein sequence ID" value="CAE49786.1"/>
    <property type="molecule type" value="Genomic_DNA"/>
</dbReference>
<dbReference type="RefSeq" id="WP_003851495.1">
    <property type="nucleotide sequence ID" value="NC_002935.2"/>
</dbReference>
<dbReference type="SMR" id="P60535"/>
<dbReference type="STRING" id="257309.DIP1257"/>
<dbReference type="KEGG" id="cdi:DIP1257"/>
<dbReference type="HOGENOM" id="CLU_123337_2_1_11"/>
<dbReference type="UniPathway" id="UPA00031">
    <property type="reaction ID" value="UER00007"/>
</dbReference>
<dbReference type="Proteomes" id="UP000002198">
    <property type="component" value="Chromosome"/>
</dbReference>
<dbReference type="GO" id="GO:0005737">
    <property type="term" value="C:cytoplasm"/>
    <property type="evidence" value="ECO:0007669"/>
    <property type="project" value="UniProtKB-SubCell"/>
</dbReference>
<dbReference type="GO" id="GO:0005524">
    <property type="term" value="F:ATP binding"/>
    <property type="evidence" value="ECO:0007669"/>
    <property type="project" value="UniProtKB-KW"/>
</dbReference>
<dbReference type="GO" id="GO:0004636">
    <property type="term" value="F:phosphoribosyl-ATP diphosphatase activity"/>
    <property type="evidence" value="ECO:0007669"/>
    <property type="project" value="UniProtKB-UniRule"/>
</dbReference>
<dbReference type="GO" id="GO:0000105">
    <property type="term" value="P:L-histidine biosynthetic process"/>
    <property type="evidence" value="ECO:0007669"/>
    <property type="project" value="UniProtKB-UniRule"/>
</dbReference>
<dbReference type="CDD" id="cd11547">
    <property type="entry name" value="NTP-PPase_HisE"/>
    <property type="match status" value="1"/>
</dbReference>
<dbReference type="Gene3D" id="1.10.287.1080">
    <property type="entry name" value="MazG-like"/>
    <property type="match status" value="1"/>
</dbReference>
<dbReference type="HAMAP" id="MF_01020">
    <property type="entry name" value="HisE"/>
    <property type="match status" value="1"/>
</dbReference>
<dbReference type="InterPro" id="IPR008179">
    <property type="entry name" value="HisE"/>
</dbReference>
<dbReference type="InterPro" id="IPR021130">
    <property type="entry name" value="PRib-ATP_PPHydrolase-like"/>
</dbReference>
<dbReference type="NCBIfam" id="TIGR03188">
    <property type="entry name" value="histidine_hisI"/>
    <property type="match status" value="1"/>
</dbReference>
<dbReference type="NCBIfam" id="NF001610">
    <property type="entry name" value="PRK00400.1-1"/>
    <property type="match status" value="1"/>
</dbReference>
<dbReference type="PANTHER" id="PTHR42945">
    <property type="entry name" value="HISTIDINE BIOSYNTHESIS BIFUNCTIONAL PROTEIN"/>
    <property type="match status" value="1"/>
</dbReference>
<dbReference type="PANTHER" id="PTHR42945:SF1">
    <property type="entry name" value="HISTIDINE BIOSYNTHESIS BIFUNCTIONAL PROTEIN HIS7"/>
    <property type="match status" value="1"/>
</dbReference>
<dbReference type="Pfam" id="PF01503">
    <property type="entry name" value="PRA-PH"/>
    <property type="match status" value="1"/>
</dbReference>
<dbReference type="SUPFAM" id="SSF101386">
    <property type="entry name" value="all-alpha NTP pyrophosphatases"/>
    <property type="match status" value="1"/>
</dbReference>
<proteinExistence type="inferred from homology"/>
<gene>
    <name evidence="1" type="primary">hisE</name>
    <name type="ordered locus">DIP1257</name>
</gene>
<evidence type="ECO:0000255" key="1">
    <source>
        <dbReference type="HAMAP-Rule" id="MF_01020"/>
    </source>
</evidence>
<reference key="1">
    <citation type="journal article" date="2003" name="Nucleic Acids Res.">
        <title>The complete genome sequence and analysis of Corynebacterium diphtheriae NCTC13129.</title>
        <authorList>
            <person name="Cerdeno-Tarraga A.-M."/>
            <person name="Efstratiou A."/>
            <person name="Dover L.G."/>
            <person name="Holden M.T.G."/>
            <person name="Pallen M.J."/>
            <person name="Bentley S.D."/>
            <person name="Besra G.S."/>
            <person name="Churcher C.M."/>
            <person name="James K.D."/>
            <person name="De Zoysa A."/>
            <person name="Chillingworth T."/>
            <person name="Cronin A."/>
            <person name="Dowd L."/>
            <person name="Feltwell T."/>
            <person name="Hamlin N."/>
            <person name="Holroyd S."/>
            <person name="Jagels K."/>
            <person name="Moule S."/>
            <person name="Quail M.A."/>
            <person name="Rabbinowitsch E."/>
            <person name="Rutherford K.M."/>
            <person name="Thomson N.R."/>
            <person name="Unwin L."/>
            <person name="Whitehead S."/>
            <person name="Barrell B.G."/>
            <person name="Parkhill J."/>
        </authorList>
    </citation>
    <scope>NUCLEOTIDE SEQUENCE [LARGE SCALE GENOMIC DNA]</scope>
    <source>
        <strain>ATCC 700971 / NCTC 13129 / Biotype gravis</strain>
    </source>
</reference>
<name>HIS2_CORDI</name>
<protein>
    <recommendedName>
        <fullName evidence="1">Phosphoribosyl-ATP pyrophosphatase</fullName>
        <shortName evidence="1">PRA-PH</shortName>
        <ecNumber evidence="1">3.6.1.31</ecNumber>
    </recommendedName>
</protein>
<keyword id="KW-0028">Amino-acid biosynthesis</keyword>
<keyword id="KW-0067">ATP-binding</keyword>
<keyword id="KW-0963">Cytoplasm</keyword>
<keyword id="KW-0368">Histidine biosynthesis</keyword>
<keyword id="KW-0378">Hydrolase</keyword>
<keyword id="KW-0547">Nucleotide-binding</keyword>
<keyword id="KW-1185">Reference proteome</keyword>
<comment type="catalytic activity">
    <reaction evidence="1">
        <text>1-(5-phospho-beta-D-ribosyl)-ATP + H2O = 1-(5-phospho-beta-D-ribosyl)-5'-AMP + diphosphate + H(+)</text>
        <dbReference type="Rhea" id="RHEA:22828"/>
        <dbReference type="ChEBI" id="CHEBI:15377"/>
        <dbReference type="ChEBI" id="CHEBI:15378"/>
        <dbReference type="ChEBI" id="CHEBI:33019"/>
        <dbReference type="ChEBI" id="CHEBI:59457"/>
        <dbReference type="ChEBI" id="CHEBI:73183"/>
        <dbReference type="EC" id="3.6.1.31"/>
    </reaction>
</comment>
<comment type="pathway">
    <text evidence="1">Amino-acid biosynthesis; L-histidine biosynthesis; L-histidine from 5-phospho-alpha-D-ribose 1-diphosphate: step 2/9.</text>
</comment>
<comment type="subcellular location">
    <subcellularLocation>
        <location evidence="1">Cytoplasm</location>
    </subcellularLocation>
</comment>
<comment type="similarity">
    <text evidence="1">Belongs to the PRA-PH family.</text>
</comment>
<organism>
    <name type="scientific">Corynebacterium diphtheriae (strain ATCC 700971 / NCTC 13129 / Biotype gravis)</name>
    <dbReference type="NCBI Taxonomy" id="257309"/>
    <lineage>
        <taxon>Bacteria</taxon>
        <taxon>Bacillati</taxon>
        <taxon>Actinomycetota</taxon>
        <taxon>Actinomycetes</taxon>
        <taxon>Mycobacteriales</taxon>
        <taxon>Corynebacteriaceae</taxon>
        <taxon>Corynebacterium</taxon>
    </lineage>
</organism>
<accession>P60535</accession>
<feature type="chain" id="PRO_0000136359" description="Phosphoribosyl-ATP pyrophosphatase">
    <location>
        <begin position="1"/>
        <end position="87"/>
    </location>
</feature>
<sequence length="87" mass="9876">MKNFDSLYHELAERAEKRPEGSGTVAALNSSLHTLGKKVIEEAGEVWLAAEYQSDAELAEEISQLMYWAQVIMIKRGLTPEDIYKYL</sequence>